<comment type="function">
    <text evidence="1">Phosphorylation of dTMP to form dTDP in both de novo and salvage pathways of dTTP synthesis.</text>
</comment>
<comment type="catalytic activity">
    <reaction evidence="1">
        <text>dTMP + ATP = dTDP + ADP</text>
        <dbReference type="Rhea" id="RHEA:13517"/>
        <dbReference type="ChEBI" id="CHEBI:30616"/>
        <dbReference type="ChEBI" id="CHEBI:58369"/>
        <dbReference type="ChEBI" id="CHEBI:63528"/>
        <dbReference type="ChEBI" id="CHEBI:456216"/>
        <dbReference type="EC" id="2.7.4.9"/>
    </reaction>
</comment>
<comment type="similarity">
    <text evidence="1">Belongs to the thymidylate kinase family.</text>
</comment>
<proteinExistence type="inferred from homology"/>
<feature type="chain" id="PRO_1000058257" description="Thymidylate kinase">
    <location>
        <begin position="1"/>
        <end position="212"/>
    </location>
</feature>
<feature type="binding site" evidence="1">
    <location>
        <begin position="10"/>
        <end position="17"/>
    </location>
    <ligand>
        <name>ATP</name>
        <dbReference type="ChEBI" id="CHEBI:30616"/>
    </ligand>
</feature>
<organism>
    <name type="scientific">Serratia proteamaculans (strain 568)</name>
    <dbReference type="NCBI Taxonomy" id="399741"/>
    <lineage>
        <taxon>Bacteria</taxon>
        <taxon>Pseudomonadati</taxon>
        <taxon>Pseudomonadota</taxon>
        <taxon>Gammaproteobacteria</taxon>
        <taxon>Enterobacterales</taxon>
        <taxon>Yersiniaceae</taxon>
        <taxon>Serratia</taxon>
    </lineage>
</organism>
<dbReference type="EC" id="2.7.4.9" evidence="1"/>
<dbReference type="EMBL" id="CP000826">
    <property type="protein sequence ID" value="ABV41014.1"/>
    <property type="molecule type" value="Genomic_DNA"/>
</dbReference>
<dbReference type="SMR" id="A8GD24"/>
<dbReference type="STRING" id="399741.Spro_1911"/>
<dbReference type="KEGG" id="spe:Spro_1911"/>
<dbReference type="eggNOG" id="COG0125">
    <property type="taxonomic scope" value="Bacteria"/>
</dbReference>
<dbReference type="HOGENOM" id="CLU_049131_0_1_6"/>
<dbReference type="OrthoDB" id="9774907at2"/>
<dbReference type="GO" id="GO:0005829">
    <property type="term" value="C:cytosol"/>
    <property type="evidence" value="ECO:0007669"/>
    <property type="project" value="TreeGrafter"/>
</dbReference>
<dbReference type="GO" id="GO:0005524">
    <property type="term" value="F:ATP binding"/>
    <property type="evidence" value="ECO:0007669"/>
    <property type="project" value="UniProtKB-UniRule"/>
</dbReference>
<dbReference type="GO" id="GO:0004798">
    <property type="term" value="F:dTMP kinase activity"/>
    <property type="evidence" value="ECO:0007669"/>
    <property type="project" value="UniProtKB-UniRule"/>
</dbReference>
<dbReference type="GO" id="GO:0006233">
    <property type="term" value="P:dTDP biosynthetic process"/>
    <property type="evidence" value="ECO:0007669"/>
    <property type="project" value="InterPro"/>
</dbReference>
<dbReference type="GO" id="GO:0006235">
    <property type="term" value="P:dTTP biosynthetic process"/>
    <property type="evidence" value="ECO:0007669"/>
    <property type="project" value="UniProtKB-UniRule"/>
</dbReference>
<dbReference type="GO" id="GO:0006227">
    <property type="term" value="P:dUDP biosynthetic process"/>
    <property type="evidence" value="ECO:0007669"/>
    <property type="project" value="TreeGrafter"/>
</dbReference>
<dbReference type="CDD" id="cd01672">
    <property type="entry name" value="TMPK"/>
    <property type="match status" value="1"/>
</dbReference>
<dbReference type="FunFam" id="3.40.50.300:FF:000321">
    <property type="entry name" value="Thymidylate kinase"/>
    <property type="match status" value="1"/>
</dbReference>
<dbReference type="Gene3D" id="3.40.50.300">
    <property type="entry name" value="P-loop containing nucleotide triphosphate hydrolases"/>
    <property type="match status" value="1"/>
</dbReference>
<dbReference type="HAMAP" id="MF_00165">
    <property type="entry name" value="Thymidylate_kinase"/>
    <property type="match status" value="1"/>
</dbReference>
<dbReference type="InterPro" id="IPR027417">
    <property type="entry name" value="P-loop_NTPase"/>
</dbReference>
<dbReference type="InterPro" id="IPR039430">
    <property type="entry name" value="Thymidylate_kin-like_dom"/>
</dbReference>
<dbReference type="InterPro" id="IPR018095">
    <property type="entry name" value="Thymidylate_kin_CS"/>
</dbReference>
<dbReference type="InterPro" id="IPR018094">
    <property type="entry name" value="Thymidylate_kinase"/>
</dbReference>
<dbReference type="NCBIfam" id="TIGR00041">
    <property type="entry name" value="DTMP_kinase"/>
    <property type="match status" value="1"/>
</dbReference>
<dbReference type="PANTHER" id="PTHR10344">
    <property type="entry name" value="THYMIDYLATE KINASE"/>
    <property type="match status" value="1"/>
</dbReference>
<dbReference type="PANTHER" id="PTHR10344:SF4">
    <property type="entry name" value="UMP-CMP KINASE 2, MITOCHONDRIAL"/>
    <property type="match status" value="1"/>
</dbReference>
<dbReference type="Pfam" id="PF02223">
    <property type="entry name" value="Thymidylate_kin"/>
    <property type="match status" value="1"/>
</dbReference>
<dbReference type="SUPFAM" id="SSF52540">
    <property type="entry name" value="P-loop containing nucleoside triphosphate hydrolases"/>
    <property type="match status" value="1"/>
</dbReference>
<dbReference type="PROSITE" id="PS01331">
    <property type="entry name" value="THYMIDYLATE_KINASE"/>
    <property type="match status" value="1"/>
</dbReference>
<accession>A8GD24</accession>
<protein>
    <recommendedName>
        <fullName evidence="1">Thymidylate kinase</fullName>
        <ecNumber evidence="1">2.7.4.9</ecNumber>
    </recommendedName>
    <alternativeName>
        <fullName evidence="1">dTMP kinase</fullName>
    </alternativeName>
</protein>
<name>KTHY_SERP5</name>
<keyword id="KW-0067">ATP-binding</keyword>
<keyword id="KW-0418">Kinase</keyword>
<keyword id="KW-0545">Nucleotide biosynthesis</keyword>
<keyword id="KW-0547">Nucleotide-binding</keyword>
<keyword id="KW-0808">Transferase</keyword>
<reference key="1">
    <citation type="submission" date="2007-09" db="EMBL/GenBank/DDBJ databases">
        <title>Complete sequence of chromosome of Serratia proteamaculans 568.</title>
        <authorList>
            <consortium name="US DOE Joint Genome Institute"/>
            <person name="Copeland A."/>
            <person name="Lucas S."/>
            <person name="Lapidus A."/>
            <person name="Barry K."/>
            <person name="Glavina del Rio T."/>
            <person name="Dalin E."/>
            <person name="Tice H."/>
            <person name="Pitluck S."/>
            <person name="Chain P."/>
            <person name="Malfatti S."/>
            <person name="Shin M."/>
            <person name="Vergez L."/>
            <person name="Schmutz J."/>
            <person name="Larimer F."/>
            <person name="Land M."/>
            <person name="Hauser L."/>
            <person name="Kyrpides N."/>
            <person name="Kim E."/>
            <person name="Taghavi S."/>
            <person name="Newman L."/>
            <person name="Vangronsveld J."/>
            <person name="van der Lelie D."/>
            <person name="Richardson P."/>
        </authorList>
    </citation>
    <scope>NUCLEOTIDE SEQUENCE [LARGE SCALE GENOMIC DNA]</scope>
    <source>
        <strain>568</strain>
    </source>
</reference>
<gene>
    <name evidence="1" type="primary">tmk</name>
    <name type="ordered locus">Spro_1911</name>
</gene>
<sequence>MKSKFVVIEGLEGAGKTTARDTVVDVLREHGINDIAFTREPGGTPLAEKLRDLFKRGVEGELPTIKAEVLMLYAARVQLVETVIKPALARGAWVVGDRHDLSSQAYQGGGRGVDQQLMASLRDTVLGEFRPDLTLYLDLPPIVGLQRARARGELDRIEQEALPFFERTRARYRELAAQDASIITVDASQSLDQVTAAIRRCVSQWLQQQEGA</sequence>
<evidence type="ECO:0000255" key="1">
    <source>
        <dbReference type="HAMAP-Rule" id="MF_00165"/>
    </source>
</evidence>